<comment type="function">
    <text evidence="2">Antimicrobial peptide. Has strong antibacterial activity against the Gram-positive bacterium C.glutamicum (MIC=0.4 uM) and the Gram-negative bacterium E.coli (MIC=12.5 uM). Has weak antibacterial activity against the Gram-positive bacterium S.aureus (MIC&gt;50 uM) and the Gram-negative bacterium P.aeruginosa (MIC&gt;50 uM). Has antifungal activity against S.cerevisiae (MIC=12.5) and C.albicans (MIC=6.3 uM). Has weak antifungal activity against the mold B.cinerea. Presents chitin-binding activity.</text>
</comment>
<comment type="subcellular location">
    <subcellularLocation>
        <location evidence="1">Cytoplasmic granule</location>
    </subcellularLocation>
</comment>
<comment type="tissue specificity">
    <text evidence="2">Strongly expressed in hemocytes, with weaker expression in gills and epidermis. Expressed at low levels in hepatopancreas.</text>
</comment>
<comment type="mass spectrometry" mass="11715.1" method="Electrospray" evidence="2"/>
<comment type="online information" name="The antimicrobial peptide database">
    <link uri="https://wangapd3.com/database/query_output.php?ID=02620"/>
</comment>
<dbReference type="EMBL" id="FJ764995">
    <property type="protein sequence ID" value="ACQ76432.1"/>
    <property type="molecule type" value="mRNA"/>
</dbReference>
<dbReference type="GO" id="GO:0005737">
    <property type="term" value="C:cytoplasm"/>
    <property type="evidence" value="ECO:0000250"/>
    <property type="project" value="UniProtKB"/>
</dbReference>
<dbReference type="GO" id="GO:0008061">
    <property type="term" value="F:chitin binding"/>
    <property type="evidence" value="ECO:0007669"/>
    <property type="project" value="UniProtKB-KW"/>
</dbReference>
<dbReference type="GO" id="GO:0050832">
    <property type="term" value="P:defense response to fungus"/>
    <property type="evidence" value="ECO:0000314"/>
    <property type="project" value="UniProtKB"/>
</dbReference>
<dbReference type="GO" id="GO:0050829">
    <property type="term" value="P:defense response to Gram-negative bacterium"/>
    <property type="evidence" value="ECO:0000314"/>
    <property type="project" value="UniProtKB"/>
</dbReference>
<dbReference type="GO" id="GO:0050830">
    <property type="term" value="P:defense response to Gram-positive bacterium"/>
    <property type="evidence" value="ECO:0000314"/>
    <property type="project" value="UniProtKB"/>
</dbReference>
<dbReference type="GO" id="GO:0031640">
    <property type="term" value="P:killing of cells of another organism"/>
    <property type="evidence" value="ECO:0007669"/>
    <property type="project" value="UniProtKB-KW"/>
</dbReference>
<organism>
    <name type="scientific">Hyas araneus</name>
    <name type="common">Atlantic lyre crab</name>
    <name type="synonym">Great spider crab</name>
    <dbReference type="NCBI Taxonomy" id="361634"/>
    <lineage>
        <taxon>Eukaryota</taxon>
        <taxon>Metazoa</taxon>
        <taxon>Ecdysozoa</taxon>
        <taxon>Arthropoda</taxon>
        <taxon>Crustacea</taxon>
        <taxon>Multicrustacea</taxon>
        <taxon>Malacostraca</taxon>
        <taxon>Eumalacostraca</taxon>
        <taxon>Eucarida</taxon>
        <taxon>Decapoda</taxon>
        <taxon>Pleocyemata</taxon>
        <taxon>Brachyura</taxon>
        <taxon>Eubrachyura</taxon>
        <taxon>Majoidea</taxon>
        <taxon>Majidae</taxon>
        <taxon>Hyas</taxon>
    </lineage>
</organism>
<keyword id="KW-0027">Amidation</keyword>
<keyword id="KW-0044">Antibiotic</keyword>
<keyword id="KW-0929">Antimicrobial</keyword>
<keyword id="KW-0147">Chitin-binding</keyword>
<keyword id="KW-0903">Direct protein sequencing</keyword>
<keyword id="KW-1015">Disulfide bond</keyword>
<keyword id="KW-0295">Fungicide</keyword>
<keyword id="KW-0732">Signal</keyword>
<feature type="signal peptide" evidence="2">
    <location>
        <begin position="1"/>
        <end position="16"/>
    </location>
</feature>
<feature type="chain" id="PRO_5000467153" description="Hyastatin" evidence="2">
    <location>
        <begin position="17"/>
        <end position="130"/>
    </location>
</feature>
<feature type="modified residue" description="Lysine amide" evidence="1">
    <location>
        <position position="130"/>
    </location>
</feature>
<feature type="disulfide bond" evidence="1">
    <location>
        <begin position="103"/>
        <end position="117"/>
    </location>
</feature>
<feature type="disulfide bond" evidence="1">
    <location>
        <begin position="107"/>
        <end position="124"/>
    </location>
</feature>
<feature type="disulfide bond" evidence="1">
    <location>
        <begin position="118"/>
        <end position="125"/>
    </location>
</feature>
<reference evidence="4 5" key="1">
    <citation type="journal article" date="2009" name="Mol. Immunol.">
        <title>Hyastatin, a glycine-rich multi-domain antimicrobial peptide isolated from the spider crab (Hyas araneus) hemocytes.</title>
        <authorList>
            <person name="Sperstad S.V."/>
            <person name="Haug T."/>
            <person name="Vasskog T."/>
            <person name="Stensvag K."/>
        </authorList>
    </citation>
    <scope>NUCLEOTIDE SEQUENCE [MRNA]</scope>
    <scope>PROTEIN SEQUENCE OF 17-67</scope>
    <scope>FUNCTION</scope>
    <scope>TISSUE SPECIFICITY</scope>
    <scope>MASS SPECTROMETRY</scope>
    <source>
        <tissue evidence="2">Hemocyte</tissue>
    </source>
</reference>
<protein>
    <recommendedName>
        <fullName evidence="3 5">Hyastatin</fullName>
    </recommendedName>
</protein>
<proteinExistence type="evidence at protein level"/>
<sequence length="131" mass="13452">MRVLLILVSLAALAHAESFLKSKTGYQGVQTLPGFIGGSQPHLGGGIGGGRPFISQPNLGGGIGGGIGGGKPFIPQPNLGGGIGSTRPFPRPQYGDYGSRNSCNRQCPSTYGGRGICCRRWGSCCPTNYKG</sequence>
<evidence type="ECO:0000250" key="1">
    <source>
        <dbReference type="UniProtKB" id="P81058"/>
    </source>
</evidence>
<evidence type="ECO:0000269" key="2">
    <source>
    </source>
</evidence>
<evidence type="ECO:0000303" key="3">
    <source>
    </source>
</evidence>
<evidence type="ECO:0000305" key="4"/>
<evidence type="ECO:0000312" key="5">
    <source>
        <dbReference type="EMBL" id="ACQ76432.1"/>
    </source>
</evidence>
<accession>C4NZN9</accession>
<name>HYAST_HYAAR</name>